<keyword id="KW-0067">ATP-binding</keyword>
<keyword id="KW-0175">Coiled coil</keyword>
<keyword id="KW-0347">Helicase</keyword>
<keyword id="KW-0378">Hydrolase</keyword>
<keyword id="KW-0547">Nucleotide-binding</keyword>
<keyword id="KW-0539">Nucleus</keyword>
<keyword id="KW-0597">Phosphoprotein</keyword>
<keyword id="KW-1185">Reference proteome</keyword>
<keyword id="KW-0690">Ribosome biogenesis</keyword>
<keyword id="KW-0694">RNA-binding</keyword>
<feature type="chain" id="PRO_0000055045" description="ATP-dependent RNA helicase DRS1">
    <location>
        <begin position="1"/>
        <end position="752"/>
    </location>
</feature>
<feature type="domain" description="Helicase ATP-binding" evidence="2">
    <location>
        <begin position="262"/>
        <end position="437"/>
    </location>
</feature>
<feature type="domain" description="Helicase C-terminal" evidence="3">
    <location>
        <begin position="448"/>
        <end position="639"/>
    </location>
</feature>
<feature type="region of interest" description="Disordered" evidence="4">
    <location>
        <begin position="1"/>
        <end position="61"/>
    </location>
</feature>
<feature type="region of interest" description="Disordered" evidence="4">
    <location>
        <begin position="119"/>
        <end position="223"/>
    </location>
</feature>
<feature type="region of interest" description="Disordered" evidence="4">
    <location>
        <begin position="673"/>
        <end position="752"/>
    </location>
</feature>
<feature type="coiled-coil region" evidence="1">
    <location>
        <begin position="621"/>
        <end position="667"/>
    </location>
</feature>
<feature type="short sequence motif" description="Q motif">
    <location>
        <begin position="231"/>
        <end position="259"/>
    </location>
</feature>
<feature type="short sequence motif" description="DEAD box">
    <location>
        <begin position="385"/>
        <end position="388"/>
    </location>
</feature>
<feature type="compositionally biased region" description="Acidic residues" evidence="4">
    <location>
        <begin position="19"/>
        <end position="34"/>
    </location>
</feature>
<feature type="compositionally biased region" description="Basic residues" evidence="4">
    <location>
        <begin position="40"/>
        <end position="51"/>
    </location>
</feature>
<feature type="compositionally biased region" description="Basic and acidic residues" evidence="4">
    <location>
        <begin position="124"/>
        <end position="142"/>
    </location>
</feature>
<feature type="compositionally biased region" description="Acidic residues" evidence="4">
    <location>
        <begin position="167"/>
        <end position="191"/>
    </location>
</feature>
<feature type="compositionally biased region" description="Acidic residues" evidence="4">
    <location>
        <begin position="200"/>
        <end position="209"/>
    </location>
</feature>
<feature type="compositionally biased region" description="Basic residues" evidence="4">
    <location>
        <begin position="694"/>
        <end position="705"/>
    </location>
</feature>
<feature type="compositionally biased region" description="Basic and acidic residues" evidence="4">
    <location>
        <begin position="722"/>
        <end position="734"/>
    </location>
</feature>
<feature type="compositionally biased region" description="Basic residues" evidence="4">
    <location>
        <begin position="735"/>
        <end position="752"/>
    </location>
</feature>
<feature type="binding site" evidence="2">
    <location>
        <begin position="275"/>
        <end position="282"/>
    </location>
    <ligand>
        <name>ATP</name>
        <dbReference type="ChEBI" id="CHEBI:30616"/>
    </ligand>
</feature>
<feature type="modified residue" description="Phosphoserine" evidence="11 12">
    <location>
        <position position="208"/>
    </location>
</feature>
<feature type="mutagenesis site" description="No growth at 13 degrees Celsius; when associated with Q-431 and G-472." evidence="5">
    <original>M</original>
    <variation>T</variation>
    <location>
        <position position="191"/>
    </location>
</feature>
<feature type="mutagenesis site" description="No growth at 13 degrees Celsius; when associated with P-564." evidence="5">
    <original>A</original>
    <variation>V</variation>
    <location>
        <position position="260"/>
    </location>
</feature>
<feature type="mutagenesis site" description="No growth at 13 degrees Celsius." evidence="5">
    <original>A</original>
    <variation>T</variation>
    <location>
        <position position="273"/>
    </location>
</feature>
<feature type="mutagenesis site" description="No growth at 13 degrees Celsius." evidence="5">
    <original>P</original>
    <variation>L</variation>
    <location>
        <position position="288"/>
    </location>
</feature>
<feature type="mutagenesis site" description="No growth at 13 degrees Celsius; when associated with G-637." evidence="5">
    <original>E</original>
    <variation>V</variation>
    <location>
        <position position="291"/>
    </location>
</feature>
<feature type="mutagenesis site" description="No growth at 13 degrees Celsius; when associated with V-306." evidence="5">
    <original>V</original>
    <variation>D</variation>
    <location>
        <position position="305"/>
    </location>
</feature>
<feature type="mutagenesis site" description="No growth at 13 degrees Celsius; when associated with D-305." evidence="5">
    <original>I</original>
    <variation>V</variation>
    <location>
        <position position="306"/>
    </location>
</feature>
<feature type="mutagenesis site" description="No growth at 13 degrees Celsius." evidence="5">
    <original>L</original>
    <variation>S</variation>
    <location>
        <position position="414"/>
    </location>
</feature>
<feature type="mutagenesis site" description="No growth at 13 degrees Celsius." evidence="5">
    <original>L</original>
    <variation>P</variation>
    <location>
        <position position="429"/>
    </location>
</feature>
<feature type="mutagenesis site" description="No growth at 13 degrees Celsius; when associated with T-191 and G-472." evidence="5">
    <original>L</original>
    <variation>Q</variation>
    <location>
        <position position="431"/>
    </location>
</feature>
<feature type="mutagenesis site" description="No growth at 13 degrees Celsius; when associated with T-191 and Q-431." evidence="5">
    <original>R</original>
    <variation>G</variation>
    <location>
        <position position="472"/>
    </location>
</feature>
<feature type="mutagenesis site" description="No growth at 13 degrees Celsius." evidence="5">
    <original>L</original>
    <variation>S</variation>
    <location>
        <position position="509"/>
    </location>
</feature>
<feature type="mutagenesis site" description="No growth at 13 degrees Celsius." evidence="5">
    <original>Y</original>
    <variation>C</variation>
    <location>
        <position position="563"/>
    </location>
</feature>
<feature type="mutagenesis site" description="No growth at 13 degrees Celsius; when associated with V-260." evidence="5">
    <original>L</original>
    <variation>P</variation>
    <location>
        <position position="564"/>
    </location>
</feature>
<feature type="mutagenesis site" description="No growth at 13 degrees Celsius; when associated with V-291." evidence="5">
    <original>D</original>
    <variation>G</variation>
    <location>
        <position position="637"/>
    </location>
</feature>
<evidence type="ECO:0000255" key="1"/>
<evidence type="ECO:0000255" key="2">
    <source>
        <dbReference type="PROSITE-ProRule" id="PRU00541"/>
    </source>
</evidence>
<evidence type="ECO:0000255" key="3">
    <source>
        <dbReference type="PROSITE-ProRule" id="PRU00542"/>
    </source>
</evidence>
<evidence type="ECO:0000256" key="4">
    <source>
        <dbReference type="SAM" id="MobiDB-lite"/>
    </source>
</evidence>
<evidence type="ECO:0000269" key="5">
    <source>
    </source>
</evidence>
<evidence type="ECO:0000269" key="6">
    <source>
    </source>
</evidence>
<evidence type="ECO:0000269" key="7">
    <source>
    </source>
</evidence>
<evidence type="ECO:0000269" key="8">
    <source>
    </source>
</evidence>
<evidence type="ECO:0000269" key="9">
    <source>
    </source>
</evidence>
<evidence type="ECO:0000305" key="10"/>
<evidence type="ECO:0007744" key="11">
    <source>
    </source>
</evidence>
<evidence type="ECO:0007744" key="12">
    <source>
    </source>
</evidence>
<accession>P32892</accession>
<accession>D6VXZ4</accession>
<dbReference type="EC" id="3.6.4.13"/>
<dbReference type="EMBL" id="L00683">
    <property type="protein sequence ID" value="AAA34666.1"/>
    <property type="status" value="ALT_FRAME"/>
    <property type="molecule type" value="Genomic_DNA"/>
</dbReference>
<dbReference type="EMBL" id="X91488">
    <property type="protein sequence ID" value="CAA62783.1"/>
    <property type="molecule type" value="Genomic_DNA"/>
</dbReference>
<dbReference type="EMBL" id="Z73113">
    <property type="protein sequence ID" value="CAA97452.1"/>
    <property type="molecule type" value="Genomic_DNA"/>
</dbReference>
<dbReference type="EMBL" id="BK006945">
    <property type="protein sequence ID" value="DAA09310.1"/>
    <property type="molecule type" value="Genomic_DNA"/>
</dbReference>
<dbReference type="PIR" id="S64750">
    <property type="entry name" value="S64750"/>
</dbReference>
<dbReference type="RefSeq" id="NP_013093.1">
    <property type="nucleotide sequence ID" value="NM_001181828.1"/>
</dbReference>
<dbReference type="SMR" id="P32892"/>
<dbReference type="BioGRID" id="31243">
    <property type="interactions" value="257"/>
</dbReference>
<dbReference type="DIP" id="DIP-6471N"/>
<dbReference type="FunCoup" id="P32892">
    <property type="interactions" value="1130"/>
</dbReference>
<dbReference type="IntAct" id="P32892">
    <property type="interactions" value="67"/>
</dbReference>
<dbReference type="MINT" id="P32892"/>
<dbReference type="STRING" id="4932.YLL008W"/>
<dbReference type="iPTMnet" id="P32892"/>
<dbReference type="PaxDb" id="4932-YLL008W"/>
<dbReference type="PeptideAtlas" id="P32892"/>
<dbReference type="EnsemblFungi" id="YLL008W_mRNA">
    <property type="protein sequence ID" value="YLL008W"/>
    <property type="gene ID" value="YLL008W"/>
</dbReference>
<dbReference type="GeneID" id="850652"/>
<dbReference type="KEGG" id="sce:YLL008W"/>
<dbReference type="AGR" id="SGD:S000003931"/>
<dbReference type="SGD" id="S000003931">
    <property type="gene designation" value="DRS1"/>
</dbReference>
<dbReference type="VEuPathDB" id="FungiDB:YLL008W"/>
<dbReference type="eggNOG" id="KOG0338">
    <property type="taxonomic scope" value="Eukaryota"/>
</dbReference>
<dbReference type="GeneTree" id="ENSGT00550000074997"/>
<dbReference type="HOGENOM" id="CLU_003041_3_2_1"/>
<dbReference type="InParanoid" id="P32892"/>
<dbReference type="OMA" id="MIDPPKQ"/>
<dbReference type="OrthoDB" id="10259843at2759"/>
<dbReference type="BioCyc" id="YEAST:G3O-32113-MONOMER"/>
<dbReference type="BioGRID-ORCS" id="850652">
    <property type="hits" value="1 hit in 10 CRISPR screens"/>
</dbReference>
<dbReference type="CD-CODE" id="BDAE0F88">
    <property type="entry name" value="Nucleolus"/>
</dbReference>
<dbReference type="PRO" id="PR:P32892"/>
<dbReference type="Proteomes" id="UP000002311">
    <property type="component" value="Chromosome XII"/>
</dbReference>
<dbReference type="RNAct" id="P32892">
    <property type="molecule type" value="protein"/>
</dbReference>
<dbReference type="GO" id="GO:0005730">
    <property type="term" value="C:nucleolus"/>
    <property type="evidence" value="ECO:0007005"/>
    <property type="project" value="SGD"/>
</dbReference>
<dbReference type="GO" id="GO:0030687">
    <property type="term" value="C:preribosome, large subunit precursor"/>
    <property type="evidence" value="ECO:0000314"/>
    <property type="project" value="SGD"/>
</dbReference>
<dbReference type="GO" id="GO:0005524">
    <property type="term" value="F:ATP binding"/>
    <property type="evidence" value="ECO:0007669"/>
    <property type="project" value="UniProtKB-KW"/>
</dbReference>
<dbReference type="GO" id="GO:0016887">
    <property type="term" value="F:ATP hydrolysis activity"/>
    <property type="evidence" value="ECO:0007669"/>
    <property type="project" value="RHEA"/>
</dbReference>
<dbReference type="GO" id="GO:0003723">
    <property type="term" value="F:RNA binding"/>
    <property type="evidence" value="ECO:0007669"/>
    <property type="project" value="UniProtKB-KW"/>
</dbReference>
<dbReference type="GO" id="GO:0003724">
    <property type="term" value="F:RNA helicase activity"/>
    <property type="evidence" value="ECO:0000247"/>
    <property type="project" value="SGD"/>
</dbReference>
<dbReference type="GO" id="GO:0000027">
    <property type="term" value="P:ribosomal large subunit assembly"/>
    <property type="evidence" value="ECO:0000315"/>
    <property type="project" value="SGD"/>
</dbReference>
<dbReference type="GO" id="GO:0006364">
    <property type="term" value="P:rRNA processing"/>
    <property type="evidence" value="ECO:0000315"/>
    <property type="project" value="SGD"/>
</dbReference>
<dbReference type="CDD" id="cd17947">
    <property type="entry name" value="DEADc_DDX27"/>
    <property type="match status" value="1"/>
</dbReference>
<dbReference type="CDD" id="cd18787">
    <property type="entry name" value="SF2_C_DEAD"/>
    <property type="match status" value="1"/>
</dbReference>
<dbReference type="FunFam" id="3.40.50.300:FF:000842">
    <property type="entry name" value="ATP-dependent RNA helicase DRS1"/>
    <property type="match status" value="1"/>
</dbReference>
<dbReference type="Gene3D" id="3.40.50.300">
    <property type="entry name" value="P-loop containing nucleotide triphosphate hydrolases"/>
    <property type="match status" value="2"/>
</dbReference>
<dbReference type="InterPro" id="IPR011545">
    <property type="entry name" value="DEAD/DEAH_box_helicase_dom"/>
</dbReference>
<dbReference type="InterPro" id="IPR050079">
    <property type="entry name" value="DEAD_box_RNA_helicase"/>
</dbReference>
<dbReference type="InterPro" id="IPR014001">
    <property type="entry name" value="Helicase_ATP-bd"/>
</dbReference>
<dbReference type="InterPro" id="IPR001650">
    <property type="entry name" value="Helicase_C-like"/>
</dbReference>
<dbReference type="InterPro" id="IPR027417">
    <property type="entry name" value="P-loop_NTPase"/>
</dbReference>
<dbReference type="InterPro" id="IPR000629">
    <property type="entry name" value="RNA-helicase_DEAD-box_CS"/>
</dbReference>
<dbReference type="InterPro" id="IPR014014">
    <property type="entry name" value="RNA_helicase_DEAD_Q_motif"/>
</dbReference>
<dbReference type="PANTHER" id="PTHR47959:SF1">
    <property type="entry name" value="ATP-DEPENDENT RNA HELICASE DBPA"/>
    <property type="match status" value="1"/>
</dbReference>
<dbReference type="PANTHER" id="PTHR47959">
    <property type="entry name" value="ATP-DEPENDENT RNA HELICASE RHLE-RELATED"/>
    <property type="match status" value="1"/>
</dbReference>
<dbReference type="Pfam" id="PF00270">
    <property type="entry name" value="DEAD"/>
    <property type="match status" value="1"/>
</dbReference>
<dbReference type="Pfam" id="PF00271">
    <property type="entry name" value="Helicase_C"/>
    <property type="match status" value="1"/>
</dbReference>
<dbReference type="SMART" id="SM00487">
    <property type="entry name" value="DEXDc"/>
    <property type="match status" value="1"/>
</dbReference>
<dbReference type="SMART" id="SM00490">
    <property type="entry name" value="HELICc"/>
    <property type="match status" value="1"/>
</dbReference>
<dbReference type="SUPFAM" id="SSF52540">
    <property type="entry name" value="P-loop containing nucleoside triphosphate hydrolases"/>
    <property type="match status" value="1"/>
</dbReference>
<dbReference type="PROSITE" id="PS00039">
    <property type="entry name" value="DEAD_ATP_HELICASE"/>
    <property type="match status" value="1"/>
</dbReference>
<dbReference type="PROSITE" id="PS51192">
    <property type="entry name" value="HELICASE_ATP_BIND_1"/>
    <property type="match status" value="1"/>
</dbReference>
<dbReference type="PROSITE" id="PS51194">
    <property type="entry name" value="HELICASE_CTER"/>
    <property type="match status" value="1"/>
</dbReference>
<dbReference type="PROSITE" id="PS51195">
    <property type="entry name" value="Q_MOTIF"/>
    <property type="match status" value="1"/>
</dbReference>
<protein>
    <recommendedName>
        <fullName>ATP-dependent RNA helicase DRS1</fullName>
        <ecNumber>3.6.4.13</ecNumber>
    </recommendedName>
    <alternativeName>
        <fullName>Deficiency of ribosomal subunits protein 1</fullName>
    </alternativeName>
</protein>
<name>DRS1_YEAST</name>
<comment type="function">
    <text evidence="5 6 9">ATP-binding RNA helicase involved in ribosome assembly.</text>
</comment>
<comment type="catalytic activity">
    <reaction>
        <text>ATP + H2O = ADP + phosphate + H(+)</text>
        <dbReference type="Rhea" id="RHEA:13065"/>
        <dbReference type="ChEBI" id="CHEBI:15377"/>
        <dbReference type="ChEBI" id="CHEBI:15378"/>
        <dbReference type="ChEBI" id="CHEBI:30616"/>
        <dbReference type="ChEBI" id="CHEBI:43474"/>
        <dbReference type="ChEBI" id="CHEBI:456216"/>
        <dbReference type="EC" id="3.6.4.13"/>
    </reaction>
</comment>
<comment type="subunit">
    <text evidence="8">Interacts with RRP1 and associates with pre-ribosomal particles.</text>
</comment>
<comment type="interaction">
    <interactant intactId="EBI-6170">
        <id>P32892</id>
    </interactant>
    <interactant intactId="EBI-5644">
        <id>Q12389</id>
        <label>DBP10</label>
    </interactant>
    <organismsDiffer>false</organismsDiffer>
    <experiments>5</experiments>
</comment>
<comment type="interaction">
    <interactant intactId="EBI-6170">
        <id>P32892</id>
    </interactant>
    <interactant intactId="EBI-6289">
        <id>P36049</id>
        <label>EBP2</label>
    </interactant>
    <organismsDiffer>false</organismsDiffer>
    <experiments>3</experiments>
</comment>
<comment type="interaction">
    <interactant intactId="EBI-6170">
        <id>P32892</id>
    </interactant>
    <interactant intactId="EBI-28098">
        <id>Q04660</id>
        <label>ERB1</label>
    </interactant>
    <organismsDiffer>false</organismsDiffer>
    <experiments>5</experiments>
</comment>
<comment type="interaction">
    <interactant intactId="EBI-6170">
        <id>P32892</id>
    </interactant>
    <interactant intactId="EBI-22906">
        <id>P43586</id>
        <label>LOC1</label>
    </interactant>
    <organismsDiffer>false</organismsDiffer>
    <experiments>5</experiments>
</comment>
<comment type="interaction">
    <interactant intactId="EBI-6170">
        <id>P32892</id>
    </interactant>
    <interactant intactId="EBI-10944">
        <id>Q12176</id>
        <label>MAK21</label>
    </interactant>
    <organismsDiffer>false</organismsDiffer>
    <experiments>3</experiments>
</comment>
<comment type="interaction">
    <interactant intactId="EBI-6170">
        <id>P32892</id>
    </interactant>
    <interactant intactId="EBI-29259">
        <id>P39744</id>
        <label>NOC2</label>
    </interactant>
    <organismsDiffer>false</organismsDiffer>
    <experiments>3</experiments>
</comment>
<comment type="interaction">
    <interactant intactId="EBI-6170">
        <id>P32892</id>
    </interactant>
    <interactant intactId="EBI-35895">
        <id>Q08208</id>
        <label>NOP12</label>
    </interactant>
    <organismsDiffer>false</organismsDiffer>
    <experiments>3</experiments>
</comment>
<comment type="interaction">
    <interactant intactId="EBI-6170">
        <id>P32892</id>
    </interactant>
    <interactant intactId="EBI-12122">
        <id>P37838</id>
        <label>NOP4</label>
    </interactant>
    <organismsDiffer>false</organismsDiffer>
    <experiments>5</experiments>
</comment>
<comment type="interaction">
    <interactant intactId="EBI-6170">
        <id>P32892</id>
    </interactant>
    <interactant intactId="EBI-22681">
        <id>P40078</id>
        <label>NSA2</label>
    </interactant>
    <organismsDiffer>false</organismsDiffer>
    <experiments>3</experiments>
</comment>
<comment type="interaction">
    <interactant intactId="EBI-6170">
        <id>P32892</id>
    </interactant>
    <interactant intactId="EBI-15415">
        <id>P40693</id>
        <label>RLP7</label>
    </interactant>
    <organismsDiffer>false</organismsDiffer>
    <experiments>4</experiments>
</comment>
<comment type="subcellular location">
    <subcellularLocation>
        <location evidence="6 7">Nucleus</location>
        <location evidence="6 7">Nucleolus</location>
    </subcellularLocation>
</comment>
<comment type="domain">
    <text>The Q motif is unique to and characteristic of the DEAD box family of RNA helicases and controls ATP binding and hydrolysis.</text>
</comment>
<comment type="similarity">
    <text evidence="10">Belongs to the DEAD box helicase family. DDX27/DRS1 subfamily.</text>
</comment>
<comment type="sequence caution" evidence="10">
    <conflict type="frameshift">
        <sequence resource="EMBL-CDS" id="AAA34666"/>
    </conflict>
</comment>
<reference key="1">
    <citation type="journal article" date="1992" name="Proc. Natl. Acad. Sci. U.S.A.">
        <title>A putative ATP-dependent RNA helicase involved in Saccharomyces cerevisiae ribosome assembly.</title>
        <authorList>
            <person name="Ripmaster T.L."/>
            <person name="Vaughn G.P."/>
            <person name="Woolford J.L. Jr."/>
        </authorList>
    </citation>
    <scope>NUCLEOTIDE SEQUENCE [GENOMIC DNA]</scope>
    <scope>FUNCTION</scope>
    <scope>SUBCELLULAR LOCATION</scope>
</reference>
<reference key="2">
    <citation type="journal article" date="1996" name="Yeast">
        <title>Sequence analysis of the CEN12 region of Saccharomyces cerevisiae on a 43.7 kb fragment of chromosome XII including an open reading frame homologous to the human cystic fibrosis transmembrane conductance regulator protein CFTR.</title>
        <authorList>
            <person name="Miosga T."/>
            <person name="Zimmermann F.K."/>
        </authorList>
    </citation>
    <scope>NUCLEOTIDE SEQUENCE [GENOMIC DNA]</scope>
    <source>
        <strain>ATCC 90840 / EAY235 / FY23</strain>
    </source>
</reference>
<reference key="3">
    <citation type="journal article" date="1997" name="Nature">
        <title>The nucleotide sequence of Saccharomyces cerevisiae chromosome XII.</title>
        <authorList>
            <person name="Johnston M."/>
            <person name="Hillier L.W."/>
            <person name="Riles L."/>
            <person name="Albermann K."/>
            <person name="Andre B."/>
            <person name="Ansorge W."/>
            <person name="Benes V."/>
            <person name="Brueckner M."/>
            <person name="Delius H."/>
            <person name="Dubois E."/>
            <person name="Duesterhoeft A."/>
            <person name="Entian K.-D."/>
            <person name="Floeth M."/>
            <person name="Goffeau A."/>
            <person name="Hebling U."/>
            <person name="Heumann K."/>
            <person name="Heuss-Neitzel D."/>
            <person name="Hilbert H."/>
            <person name="Hilger F."/>
            <person name="Kleine K."/>
            <person name="Koetter P."/>
            <person name="Louis E.J."/>
            <person name="Messenguy F."/>
            <person name="Mewes H.-W."/>
            <person name="Miosga T."/>
            <person name="Moestl D."/>
            <person name="Mueller-Auer S."/>
            <person name="Nentwich U."/>
            <person name="Obermaier B."/>
            <person name="Piravandi E."/>
            <person name="Pohl T.M."/>
            <person name="Portetelle D."/>
            <person name="Purnelle B."/>
            <person name="Rechmann S."/>
            <person name="Rieger M."/>
            <person name="Rinke M."/>
            <person name="Rose M."/>
            <person name="Scharfe M."/>
            <person name="Scherens B."/>
            <person name="Scholler P."/>
            <person name="Schwager C."/>
            <person name="Schwarz S."/>
            <person name="Underwood A.P."/>
            <person name="Urrestarazu L.A."/>
            <person name="Vandenbol M."/>
            <person name="Verhasselt P."/>
            <person name="Vierendeels F."/>
            <person name="Voet M."/>
            <person name="Volckaert G."/>
            <person name="Voss H."/>
            <person name="Wambutt R."/>
            <person name="Wedler E."/>
            <person name="Wedler H."/>
            <person name="Zimmermann F.K."/>
            <person name="Zollner A."/>
            <person name="Hani J."/>
            <person name="Hoheisel J.D."/>
        </authorList>
    </citation>
    <scope>NUCLEOTIDE SEQUENCE [LARGE SCALE GENOMIC DNA]</scope>
    <source>
        <strain>ATCC 204508 / S288c</strain>
    </source>
</reference>
<reference key="4">
    <citation type="journal article" date="2014" name="G3 (Bethesda)">
        <title>The reference genome sequence of Saccharomyces cerevisiae: Then and now.</title>
        <authorList>
            <person name="Engel S.R."/>
            <person name="Dietrich F.S."/>
            <person name="Fisk D.G."/>
            <person name="Binkley G."/>
            <person name="Balakrishnan R."/>
            <person name="Costanzo M.C."/>
            <person name="Dwight S.S."/>
            <person name="Hitz B.C."/>
            <person name="Karra K."/>
            <person name="Nash R.S."/>
            <person name="Weng S."/>
            <person name="Wong E.D."/>
            <person name="Lloyd P."/>
            <person name="Skrzypek M.S."/>
            <person name="Miyasato S.R."/>
            <person name="Simison M."/>
            <person name="Cherry J.M."/>
        </authorList>
    </citation>
    <scope>GENOME REANNOTATION</scope>
    <source>
        <strain>ATCC 204508 / S288c</strain>
    </source>
</reference>
<reference key="5">
    <citation type="journal article" date="1993" name="Mol. Cell. Biol.">
        <title>DRS1 to DRS7, novel genes required for ribosome assembly and function in Saccharomyces cerevisiae.</title>
        <authorList>
            <person name="Ripmaster T.L."/>
            <person name="Vaughn G.P."/>
            <person name="Woolford J.L. Jr."/>
        </authorList>
    </citation>
    <scope>FUNCTION</scope>
</reference>
<reference key="6">
    <citation type="journal article" date="2002" name="RNA">
        <title>Saccharomyces cerevisiae nucleolar protein Nop7p is necessary for biogenesis of 60S ribosomal subunits.</title>
        <authorList>
            <person name="Adams C.C."/>
            <person name="Jakovljevic J."/>
            <person name="Roman J."/>
            <person name="Harnpicharnchai P."/>
            <person name="Woolford J.L. Jr."/>
        </authorList>
    </citation>
    <scope>FUNCTION</scope>
    <scope>MUTAGENESIS OF MET-191; ALA-260; ALA-273; PRO-288; GLU-291; VAL-305; ILE-306; LEU-414; LEU-429; LEU-431; ARG-472; LEU-509; TYR-563; LEU-564 AND ASP-637</scope>
</reference>
<reference key="7">
    <citation type="journal article" date="2003" name="Nature">
        <title>Global analysis of protein localization in budding yeast.</title>
        <authorList>
            <person name="Huh W.-K."/>
            <person name="Falvo J.V."/>
            <person name="Gerke L.C."/>
            <person name="Carroll A.S."/>
            <person name="Howson R.W."/>
            <person name="Weissman J.S."/>
            <person name="O'Shea E.K."/>
        </authorList>
    </citation>
    <scope>SUBCELLULAR LOCATION [LARGE SCALE ANALYSIS]</scope>
</reference>
<reference key="8">
    <citation type="journal article" date="2004" name="RNA">
        <title>Role of the yeast Rrp1 protein in the dynamics of pre-ribosome maturation.</title>
        <authorList>
            <person name="Horsey E.W."/>
            <person name="Jakovljevic J."/>
            <person name="Miles T.D."/>
            <person name="Harnpicharnchai P."/>
            <person name="Woolford J.L. Jr."/>
        </authorList>
    </citation>
    <scope>INTERACTION WITH RRP1</scope>
    <scope>IDENTIFICATION BY MASS SPECTROMETRY</scope>
</reference>
<reference key="9">
    <citation type="journal article" date="2008" name="Mol. Cell. Proteomics">
        <title>A multidimensional chromatography technology for in-depth phosphoproteome analysis.</title>
        <authorList>
            <person name="Albuquerque C.P."/>
            <person name="Smolka M.B."/>
            <person name="Payne S.H."/>
            <person name="Bafna V."/>
            <person name="Eng J."/>
            <person name="Zhou H."/>
        </authorList>
    </citation>
    <scope>PHOSPHORYLATION [LARGE SCALE ANALYSIS] AT SER-208</scope>
    <scope>IDENTIFICATION BY MASS SPECTROMETRY [LARGE SCALE ANALYSIS]</scope>
</reference>
<reference key="10">
    <citation type="journal article" date="2009" name="Science">
        <title>Global analysis of Cdk1 substrate phosphorylation sites provides insights into evolution.</title>
        <authorList>
            <person name="Holt L.J."/>
            <person name="Tuch B.B."/>
            <person name="Villen J."/>
            <person name="Johnson A.D."/>
            <person name="Gygi S.P."/>
            <person name="Morgan D.O."/>
        </authorList>
    </citation>
    <scope>PHOSPHORYLATION [LARGE SCALE ANALYSIS] AT SER-208</scope>
    <scope>IDENTIFICATION BY MASS SPECTROMETRY [LARGE SCALE ANALYSIS]</scope>
</reference>
<proteinExistence type="evidence at protein level"/>
<gene>
    <name type="primary">DRS1</name>
    <name type="ordered locus">YLL008W</name>
    <name type="ORF">L1345</name>
</gene>
<organism>
    <name type="scientific">Saccharomyces cerevisiae (strain ATCC 204508 / S288c)</name>
    <name type="common">Baker's yeast</name>
    <dbReference type="NCBI Taxonomy" id="559292"/>
    <lineage>
        <taxon>Eukaryota</taxon>
        <taxon>Fungi</taxon>
        <taxon>Dikarya</taxon>
        <taxon>Ascomycota</taxon>
        <taxon>Saccharomycotina</taxon>
        <taxon>Saccharomycetes</taxon>
        <taxon>Saccharomycetales</taxon>
        <taxon>Saccharomycetaceae</taxon>
        <taxon>Saccharomyces</taxon>
    </lineage>
</organism>
<sequence>MVVGTKKYSNLDFVPTISDSEDDVPILDSSDDEKVEAKKTTKKRKGKNNKKKVSEGDNLDEDVHEDLDAGFKFDLDADDTTSNFQGWNFLAEGESNKDDAEAFVKKDVDLDKIIRRKGGLVKMAHIDSKQEEETEKEKVEKENDSDDEELAMDGFGMGAPMNNGDENQSEEEEEEEEKEEEEEEEEEQEEMTLEKGGKDDEIDEEDDSEEAKADFYAPETEGDEAKKQMYENFNSLSLSRPVLKGLASLGYVKPSPIQSATIPIALLGKDIIAGAVTGSGKTAAFMIPIIERLLYKPAKIASTRVIVLLPTRELAIQVADVGKQIARFVSGITFGLAVGGLNLRQQEQMLKSRPDIVIATPGRFIDHIRNSASFNVDSVEILVMDEADRMLEEGFQDELNEIMGLLPSNRQNLLFSATMNSKIKSLVSLSLKKPVRIMIDPPKKAATKLTQEFVRIRKRDHLKPALLFNLIRKLDPTGQKRIVVFVARKETAHRLRIIMGLLGMSVGELHGSLTQEQRLDSVNKFKNLEVPVLICTDLASRGLDIPKIEVVINYDMPKSYEIYLHRVGRTARAGREGRSVTFVGESSQDRSIVRAAIKSVEENKSLTQGKALGRNVDWVQIEETNKLVESMNDTIEDILVEEKEEKEILRAEMQLRKGENMLKHKKEIQARPRRTWFQSESDKKNSKVLGALSRNKKVTNSKKRKREEAKADGNGARSYRKTKTDRIADQERTFKKQKSTNSNKKKGFKSRR</sequence>